<feature type="chain" id="PRO_0000256000" description="ATP-dependent RNA helicase DBP4">
    <location>
        <begin position="1"/>
        <end position="825"/>
    </location>
</feature>
<feature type="domain" description="Helicase ATP-binding" evidence="2">
    <location>
        <begin position="84"/>
        <end position="258"/>
    </location>
</feature>
<feature type="domain" description="Helicase C-terminal" evidence="3">
    <location>
        <begin position="284"/>
        <end position="439"/>
    </location>
</feature>
<feature type="region of interest" description="Disordered" evidence="4">
    <location>
        <begin position="1"/>
        <end position="34"/>
    </location>
</feature>
<feature type="region of interest" description="Disordered" evidence="4">
    <location>
        <begin position="508"/>
        <end position="536"/>
    </location>
</feature>
<feature type="region of interest" description="Disordered" evidence="4">
    <location>
        <begin position="676"/>
        <end position="825"/>
    </location>
</feature>
<feature type="short sequence motif" description="Q motif">
    <location>
        <begin position="53"/>
        <end position="81"/>
    </location>
</feature>
<feature type="short sequence motif" description="DEAD box">
    <location>
        <begin position="206"/>
        <end position="209"/>
    </location>
</feature>
<feature type="compositionally biased region" description="Basic and acidic residues" evidence="4">
    <location>
        <begin position="19"/>
        <end position="34"/>
    </location>
</feature>
<feature type="compositionally biased region" description="Basic and acidic residues" evidence="4">
    <location>
        <begin position="677"/>
        <end position="691"/>
    </location>
</feature>
<feature type="compositionally biased region" description="Basic and acidic residues" evidence="4">
    <location>
        <begin position="700"/>
        <end position="714"/>
    </location>
</feature>
<feature type="compositionally biased region" description="Acidic residues" evidence="4">
    <location>
        <begin position="730"/>
        <end position="739"/>
    </location>
</feature>
<feature type="compositionally biased region" description="Acidic residues" evidence="4">
    <location>
        <begin position="761"/>
        <end position="770"/>
    </location>
</feature>
<feature type="compositionally biased region" description="Acidic residues" evidence="4">
    <location>
        <begin position="805"/>
        <end position="816"/>
    </location>
</feature>
<feature type="binding site" evidence="2">
    <location>
        <begin position="97"/>
        <end position="104"/>
    </location>
    <ligand>
        <name>ATP</name>
        <dbReference type="ChEBI" id="CHEBI:30616"/>
    </ligand>
</feature>
<accession>Q2H2J1</accession>
<name>DBP4_CHAGB</name>
<organism>
    <name type="scientific">Chaetomium globosum (strain ATCC 6205 / CBS 148.51 / DSM 1962 / NBRC 6347 / NRRL 1970)</name>
    <name type="common">Soil fungus</name>
    <dbReference type="NCBI Taxonomy" id="306901"/>
    <lineage>
        <taxon>Eukaryota</taxon>
        <taxon>Fungi</taxon>
        <taxon>Dikarya</taxon>
        <taxon>Ascomycota</taxon>
        <taxon>Pezizomycotina</taxon>
        <taxon>Sordariomycetes</taxon>
        <taxon>Sordariomycetidae</taxon>
        <taxon>Sordariales</taxon>
        <taxon>Chaetomiaceae</taxon>
        <taxon>Chaetomium</taxon>
    </lineage>
</organism>
<keyword id="KW-0067">ATP-binding</keyword>
<keyword id="KW-0347">Helicase</keyword>
<keyword id="KW-0378">Hydrolase</keyword>
<keyword id="KW-0547">Nucleotide-binding</keyword>
<keyword id="KW-0539">Nucleus</keyword>
<keyword id="KW-1185">Reference proteome</keyword>
<keyword id="KW-0690">Ribosome biogenesis</keyword>
<keyword id="KW-0694">RNA-binding</keyword>
<keyword id="KW-0698">rRNA processing</keyword>
<reference key="1">
    <citation type="journal article" date="2015" name="Genome Announc.">
        <title>Draft genome sequence of the cellulolytic fungus Chaetomium globosum.</title>
        <authorList>
            <person name="Cuomo C.A."/>
            <person name="Untereiner W.A."/>
            <person name="Ma L.-J."/>
            <person name="Grabherr M."/>
            <person name="Birren B.W."/>
        </authorList>
    </citation>
    <scope>NUCLEOTIDE SEQUENCE [LARGE SCALE GENOMIC DNA]</scope>
    <source>
        <strain>ATCC 6205 / CBS 148.51 / DSM 1962 / NBRC 6347 / NRRL 1970</strain>
    </source>
</reference>
<sequence length="825" mass="91324">MAAGNAKGGFAHRNKSVPKKTDAKSLKRKRGQEDLGKLKAAIEELDPKSPAIKQFTDLPLCEATASGLRASHFEVLTDVQRAAIPLALKGRDILGAAKTGSGKTLAFLVPVLEKLYHAKWTEYDGLGALIISPTRELAVQIFEVLRKIGRNHFFSAGLVIGGKSLKEEAERLGRMNILVCTPGRMLQHLDQTANFDVNNLQILVLDEADRIMDMGFQSAVDALVEHLPTTRQTLLFSATQSKRVSDLARLSLKEPEYVSAHEAAVSATPTNLQQSYIVTPLAEKLDTLFGFLRTNLKSKIIVFFSSGKQVRFVFESFKRMQPGIPLLHLHGRQKQVARMEITSRFSSAKYGCLFATDVVARGVDFPAVDWVVQADCPEDADTYIHRVGRTARYESKGRAVLFLEPSEEAGFLKRLEQKKVPLQKVNVRENKKKSIKNELQSYNFQSPDLKYLGQKAFISYTRSIYLQKDKEVFNFNKLDLDGYAASLGLAGTPQIKYQKGDDIKRLKNASRAAISSGSESDSDDEGKPKKDKKQVRTKYEKMAERQNQDILSSHYRKLLGEDGDAAASDDDDDFLSVKRVLADDAQIDAAAGGDATNTTTTEPKVIKLGNSELIIDSNRREKLLKSKKKLLKYMDKGTKLVFDDDGVARPVYELQDEDDFAQQGPAAALRQQFVAAESEKVKEADVDDKQAAKMRRREKRERQKARERGEELERVGAGGGGGGVAMLDGGEGDEGDEDPLALLRSLPIAGEESDGGRGGGGEDEGDDGEVEPPRKKARKWFQDDSDQEEEERQKKKKGGKKVIEMAEEPENLEDLEALAAGLLED</sequence>
<proteinExistence type="inferred from homology"/>
<evidence type="ECO:0000250" key="1"/>
<evidence type="ECO:0000255" key="2">
    <source>
        <dbReference type="PROSITE-ProRule" id="PRU00541"/>
    </source>
</evidence>
<evidence type="ECO:0000255" key="3">
    <source>
        <dbReference type="PROSITE-ProRule" id="PRU00542"/>
    </source>
</evidence>
<evidence type="ECO:0000256" key="4">
    <source>
        <dbReference type="SAM" id="MobiDB-lite"/>
    </source>
</evidence>
<evidence type="ECO:0000305" key="5"/>
<protein>
    <recommendedName>
        <fullName>ATP-dependent RNA helicase DBP4</fullName>
        <ecNumber>3.6.4.13</ecNumber>
    </recommendedName>
</protein>
<dbReference type="EC" id="3.6.4.13"/>
<dbReference type="EMBL" id="CH408032">
    <property type="protein sequence ID" value="EAQ87386.1"/>
    <property type="molecule type" value="Genomic_DNA"/>
</dbReference>
<dbReference type="RefSeq" id="XP_001223219.1">
    <property type="nucleotide sequence ID" value="XM_001223218.1"/>
</dbReference>
<dbReference type="SMR" id="Q2H2J1"/>
<dbReference type="FunCoup" id="Q2H2J1">
    <property type="interactions" value="915"/>
</dbReference>
<dbReference type="STRING" id="306901.Q2H2J1"/>
<dbReference type="GeneID" id="4391717"/>
<dbReference type="VEuPathDB" id="FungiDB:CHGG_04005"/>
<dbReference type="eggNOG" id="KOG0343">
    <property type="taxonomic scope" value="Eukaryota"/>
</dbReference>
<dbReference type="HOGENOM" id="CLU_003041_26_1_1"/>
<dbReference type="InParanoid" id="Q2H2J1"/>
<dbReference type="OMA" id="YDKMFER"/>
<dbReference type="OrthoDB" id="10259640at2759"/>
<dbReference type="Proteomes" id="UP000001056">
    <property type="component" value="Unassembled WGS sequence"/>
</dbReference>
<dbReference type="GO" id="GO:0005730">
    <property type="term" value="C:nucleolus"/>
    <property type="evidence" value="ECO:0007669"/>
    <property type="project" value="UniProtKB-SubCell"/>
</dbReference>
<dbReference type="GO" id="GO:0032040">
    <property type="term" value="C:small-subunit processome"/>
    <property type="evidence" value="ECO:0007669"/>
    <property type="project" value="EnsemblFungi"/>
</dbReference>
<dbReference type="GO" id="GO:0005524">
    <property type="term" value="F:ATP binding"/>
    <property type="evidence" value="ECO:0007669"/>
    <property type="project" value="UniProtKB-KW"/>
</dbReference>
<dbReference type="GO" id="GO:0016887">
    <property type="term" value="F:ATP hydrolysis activity"/>
    <property type="evidence" value="ECO:0007669"/>
    <property type="project" value="RHEA"/>
</dbReference>
<dbReference type="GO" id="GO:0042802">
    <property type="term" value="F:identical protein binding"/>
    <property type="evidence" value="ECO:0007669"/>
    <property type="project" value="EnsemblFungi"/>
</dbReference>
<dbReference type="GO" id="GO:0003723">
    <property type="term" value="F:RNA binding"/>
    <property type="evidence" value="ECO:0007669"/>
    <property type="project" value="UniProtKB-KW"/>
</dbReference>
<dbReference type="GO" id="GO:0003724">
    <property type="term" value="F:RNA helicase activity"/>
    <property type="evidence" value="ECO:0007669"/>
    <property type="project" value="UniProtKB-EC"/>
</dbReference>
<dbReference type="GO" id="GO:0006364">
    <property type="term" value="P:rRNA processing"/>
    <property type="evidence" value="ECO:0007669"/>
    <property type="project" value="UniProtKB-KW"/>
</dbReference>
<dbReference type="CDD" id="cd17941">
    <property type="entry name" value="DEADc_DDX10"/>
    <property type="match status" value="1"/>
</dbReference>
<dbReference type="CDD" id="cd18787">
    <property type="entry name" value="SF2_C_DEAD"/>
    <property type="match status" value="1"/>
</dbReference>
<dbReference type="Gene3D" id="3.40.50.300">
    <property type="entry name" value="P-loop containing nucleotide triphosphate hydrolases"/>
    <property type="match status" value="2"/>
</dbReference>
<dbReference type="InterPro" id="IPR011545">
    <property type="entry name" value="DEAD/DEAH_box_helicase_dom"/>
</dbReference>
<dbReference type="InterPro" id="IPR014001">
    <property type="entry name" value="Helicase_ATP-bd"/>
</dbReference>
<dbReference type="InterPro" id="IPR001650">
    <property type="entry name" value="Helicase_C-like"/>
</dbReference>
<dbReference type="InterPro" id="IPR027417">
    <property type="entry name" value="P-loop_NTPase"/>
</dbReference>
<dbReference type="InterPro" id="IPR000629">
    <property type="entry name" value="RNA-helicase_DEAD-box_CS"/>
</dbReference>
<dbReference type="InterPro" id="IPR025313">
    <property type="entry name" value="SPB4-like_CTE"/>
</dbReference>
<dbReference type="PANTHER" id="PTHR24031">
    <property type="entry name" value="RNA HELICASE"/>
    <property type="match status" value="1"/>
</dbReference>
<dbReference type="Pfam" id="PF13959">
    <property type="entry name" value="CTE_SPB4"/>
    <property type="match status" value="1"/>
</dbReference>
<dbReference type="Pfam" id="PF00270">
    <property type="entry name" value="DEAD"/>
    <property type="match status" value="1"/>
</dbReference>
<dbReference type="Pfam" id="PF00271">
    <property type="entry name" value="Helicase_C"/>
    <property type="match status" value="1"/>
</dbReference>
<dbReference type="SMART" id="SM00487">
    <property type="entry name" value="DEXDc"/>
    <property type="match status" value="1"/>
</dbReference>
<dbReference type="SMART" id="SM01178">
    <property type="entry name" value="DUF4217"/>
    <property type="match status" value="1"/>
</dbReference>
<dbReference type="SMART" id="SM00490">
    <property type="entry name" value="HELICc"/>
    <property type="match status" value="1"/>
</dbReference>
<dbReference type="SUPFAM" id="SSF52540">
    <property type="entry name" value="P-loop containing nucleoside triphosphate hydrolases"/>
    <property type="match status" value="1"/>
</dbReference>
<dbReference type="PROSITE" id="PS00039">
    <property type="entry name" value="DEAD_ATP_HELICASE"/>
    <property type="match status" value="1"/>
</dbReference>
<dbReference type="PROSITE" id="PS51192">
    <property type="entry name" value="HELICASE_ATP_BIND_1"/>
    <property type="match status" value="1"/>
</dbReference>
<dbReference type="PROSITE" id="PS51194">
    <property type="entry name" value="HELICASE_CTER"/>
    <property type="match status" value="1"/>
</dbReference>
<dbReference type="PROSITE" id="PS51195">
    <property type="entry name" value="Q_MOTIF"/>
    <property type="match status" value="1"/>
</dbReference>
<gene>
    <name type="primary">DBP4</name>
    <name type="ORF">CHGG_04005</name>
</gene>
<comment type="function">
    <text evidence="1">ATP-dependent RNA helicase required for ribosome biogenesis. Involved in the release of U14 snoRNA in pre-ribosomal complexes. Required for pre-rRNA cleavage at site A2 (By similarity).</text>
</comment>
<comment type="catalytic activity">
    <reaction>
        <text>ATP + H2O = ADP + phosphate + H(+)</text>
        <dbReference type="Rhea" id="RHEA:13065"/>
        <dbReference type="ChEBI" id="CHEBI:15377"/>
        <dbReference type="ChEBI" id="CHEBI:15378"/>
        <dbReference type="ChEBI" id="CHEBI:30616"/>
        <dbReference type="ChEBI" id="CHEBI:43474"/>
        <dbReference type="ChEBI" id="CHEBI:456216"/>
        <dbReference type="EC" id="3.6.4.13"/>
    </reaction>
</comment>
<comment type="subunit">
    <text evidence="1">Interacts with the U3 and U14 snoRNAs. Associates with pre-ribosomal complexes (By similarity).</text>
</comment>
<comment type="subcellular location">
    <subcellularLocation>
        <location evidence="1">Nucleus</location>
        <location evidence="1">Nucleolus</location>
    </subcellularLocation>
</comment>
<comment type="domain">
    <text>The Q motif is unique to and characteristic of the DEAD box family of RNA helicases and controls ATP binding and hydrolysis.</text>
</comment>
<comment type="similarity">
    <text evidence="5">Belongs to the DEAD box helicase family. DDX10/DBP4 subfamily.</text>
</comment>